<sequence>MSRPQRISVLGATGSIGLSTLDVVQRHPDRYEAFALTGFSRLAELEALCLRHRPVYAVVPEQAAAIALQGSLAAAGIRTRVLFGEQALCEVASAPEVDMVMAAIVGAAGLPSTLAAVEAGKRVLLANKEALVMSGALFMQAVKRSGAVLLPIDSEHNAIFQSLPRNYADGLERVGVRRILLTASGGPFRETPLEQLASVTPEQACAHPNWSMGRKISVDSASMMNKGLELIEACWLFDAQPSQVEVVIHPQSVIHSMVDYVDGSVIAQLGNPDMRTPISYAMAWPERIESGVAPLDMFAVGRLDFQRPDEQRFPCLRLARQAAETGGSAPAMLNAANEVAVAAFLERHIRFSDIAVIIEDVLNREAVTAVESLDQVLAADRRARSVAGQWLTRYAG</sequence>
<gene>
    <name evidence="1" type="primary">dxr</name>
    <name type="ordered locus">PSPA7_1489</name>
</gene>
<protein>
    <recommendedName>
        <fullName evidence="1">1-deoxy-D-xylulose 5-phosphate reductoisomerase</fullName>
        <shortName evidence="1">DXP reductoisomerase</shortName>
        <ecNumber evidence="1">1.1.1.267</ecNumber>
    </recommendedName>
    <alternativeName>
        <fullName evidence="1">1-deoxyxylulose-5-phosphate reductoisomerase</fullName>
    </alternativeName>
    <alternativeName>
        <fullName evidence="1">2-C-methyl-D-erythritol 4-phosphate synthase</fullName>
    </alternativeName>
</protein>
<name>DXR_PSEP7</name>
<accession>A6V1D8</accession>
<organism>
    <name type="scientific">Pseudomonas paraeruginosa (strain DSM 24068 / PA7)</name>
    <name type="common">Pseudomonas aeruginosa (strain PA7)</name>
    <dbReference type="NCBI Taxonomy" id="381754"/>
    <lineage>
        <taxon>Bacteria</taxon>
        <taxon>Pseudomonadati</taxon>
        <taxon>Pseudomonadota</taxon>
        <taxon>Gammaproteobacteria</taxon>
        <taxon>Pseudomonadales</taxon>
        <taxon>Pseudomonadaceae</taxon>
        <taxon>Pseudomonas</taxon>
        <taxon>Pseudomonas paraeruginosa</taxon>
    </lineage>
</organism>
<comment type="function">
    <text evidence="1">Catalyzes the NADPH-dependent rearrangement and reduction of 1-deoxy-D-xylulose-5-phosphate (DXP) to 2-C-methyl-D-erythritol 4-phosphate (MEP).</text>
</comment>
<comment type="catalytic activity">
    <reaction evidence="1">
        <text>2-C-methyl-D-erythritol 4-phosphate + NADP(+) = 1-deoxy-D-xylulose 5-phosphate + NADPH + H(+)</text>
        <dbReference type="Rhea" id="RHEA:13717"/>
        <dbReference type="ChEBI" id="CHEBI:15378"/>
        <dbReference type="ChEBI" id="CHEBI:57783"/>
        <dbReference type="ChEBI" id="CHEBI:57792"/>
        <dbReference type="ChEBI" id="CHEBI:58262"/>
        <dbReference type="ChEBI" id="CHEBI:58349"/>
        <dbReference type="EC" id="1.1.1.267"/>
    </reaction>
    <physiologicalReaction direction="right-to-left" evidence="1">
        <dbReference type="Rhea" id="RHEA:13719"/>
    </physiologicalReaction>
</comment>
<comment type="cofactor">
    <cofactor evidence="1">
        <name>Mg(2+)</name>
        <dbReference type="ChEBI" id="CHEBI:18420"/>
    </cofactor>
    <cofactor evidence="1">
        <name>Mn(2+)</name>
        <dbReference type="ChEBI" id="CHEBI:29035"/>
    </cofactor>
</comment>
<comment type="pathway">
    <text evidence="1">Isoprenoid biosynthesis; isopentenyl diphosphate biosynthesis via DXP pathway; isopentenyl diphosphate from 1-deoxy-D-xylulose 5-phosphate: step 1/6.</text>
</comment>
<comment type="similarity">
    <text evidence="1">Belongs to the DXR family.</text>
</comment>
<dbReference type="EC" id="1.1.1.267" evidence="1"/>
<dbReference type="EMBL" id="CP000744">
    <property type="protein sequence ID" value="ABR84206.1"/>
    <property type="molecule type" value="Genomic_DNA"/>
</dbReference>
<dbReference type="RefSeq" id="WP_003153761.1">
    <property type="nucleotide sequence ID" value="NC_009656.1"/>
</dbReference>
<dbReference type="SMR" id="A6V1D8"/>
<dbReference type="GeneID" id="77219869"/>
<dbReference type="KEGG" id="pap:PSPA7_1489"/>
<dbReference type="HOGENOM" id="CLU_035714_4_0_6"/>
<dbReference type="UniPathway" id="UPA00056">
    <property type="reaction ID" value="UER00092"/>
</dbReference>
<dbReference type="Proteomes" id="UP000001582">
    <property type="component" value="Chromosome"/>
</dbReference>
<dbReference type="GO" id="GO:0030604">
    <property type="term" value="F:1-deoxy-D-xylulose-5-phosphate reductoisomerase activity"/>
    <property type="evidence" value="ECO:0007669"/>
    <property type="project" value="UniProtKB-UniRule"/>
</dbReference>
<dbReference type="GO" id="GO:0030145">
    <property type="term" value="F:manganese ion binding"/>
    <property type="evidence" value="ECO:0007669"/>
    <property type="project" value="TreeGrafter"/>
</dbReference>
<dbReference type="GO" id="GO:0070402">
    <property type="term" value="F:NADPH binding"/>
    <property type="evidence" value="ECO:0007669"/>
    <property type="project" value="InterPro"/>
</dbReference>
<dbReference type="GO" id="GO:0051484">
    <property type="term" value="P:isopentenyl diphosphate biosynthetic process, methylerythritol 4-phosphate pathway involved in terpenoid biosynthetic process"/>
    <property type="evidence" value="ECO:0007669"/>
    <property type="project" value="TreeGrafter"/>
</dbReference>
<dbReference type="FunFam" id="1.10.1740.10:FF:000004">
    <property type="entry name" value="1-deoxy-D-xylulose 5-phosphate reductoisomerase"/>
    <property type="match status" value="1"/>
</dbReference>
<dbReference type="FunFam" id="3.40.50.720:FF:000045">
    <property type="entry name" value="1-deoxy-D-xylulose 5-phosphate reductoisomerase"/>
    <property type="match status" value="1"/>
</dbReference>
<dbReference type="Gene3D" id="1.10.1740.10">
    <property type="match status" value="1"/>
</dbReference>
<dbReference type="Gene3D" id="3.40.50.720">
    <property type="entry name" value="NAD(P)-binding Rossmann-like Domain"/>
    <property type="match status" value="1"/>
</dbReference>
<dbReference type="HAMAP" id="MF_00183">
    <property type="entry name" value="DXP_reductoisom"/>
    <property type="match status" value="1"/>
</dbReference>
<dbReference type="InterPro" id="IPR003821">
    <property type="entry name" value="DXP_reductoisomerase"/>
</dbReference>
<dbReference type="InterPro" id="IPR013644">
    <property type="entry name" value="DXP_reductoisomerase_C"/>
</dbReference>
<dbReference type="InterPro" id="IPR013512">
    <property type="entry name" value="DXP_reductoisomerase_N"/>
</dbReference>
<dbReference type="InterPro" id="IPR026877">
    <property type="entry name" value="DXPR_C"/>
</dbReference>
<dbReference type="InterPro" id="IPR036169">
    <property type="entry name" value="DXPR_C_sf"/>
</dbReference>
<dbReference type="InterPro" id="IPR036291">
    <property type="entry name" value="NAD(P)-bd_dom_sf"/>
</dbReference>
<dbReference type="NCBIfam" id="TIGR00243">
    <property type="entry name" value="Dxr"/>
    <property type="match status" value="1"/>
</dbReference>
<dbReference type="NCBIfam" id="NF003938">
    <property type="entry name" value="PRK05447.1-1"/>
    <property type="match status" value="1"/>
</dbReference>
<dbReference type="NCBIfam" id="NF009114">
    <property type="entry name" value="PRK12464.1"/>
    <property type="match status" value="1"/>
</dbReference>
<dbReference type="PANTHER" id="PTHR30525">
    <property type="entry name" value="1-DEOXY-D-XYLULOSE 5-PHOSPHATE REDUCTOISOMERASE"/>
    <property type="match status" value="1"/>
</dbReference>
<dbReference type="PANTHER" id="PTHR30525:SF0">
    <property type="entry name" value="1-DEOXY-D-XYLULOSE 5-PHOSPHATE REDUCTOISOMERASE, CHLOROPLASTIC"/>
    <property type="match status" value="1"/>
</dbReference>
<dbReference type="Pfam" id="PF08436">
    <property type="entry name" value="DXP_redisom_C"/>
    <property type="match status" value="1"/>
</dbReference>
<dbReference type="Pfam" id="PF02670">
    <property type="entry name" value="DXP_reductoisom"/>
    <property type="match status" value="1"/>
</dbReference>
<dbReference type="Pfam" id="PF13288">
    <property type="entry name" value="DXPR_C"/>
    <property type="match status" value="1"/>
</dbReference>
<dbReference type="PIRSF" id="PIRSF006205">
    <property type="entry name" value="Dxp_reductismrs"/>
    <property type="match status" value="1"/>
</dbReference>
<dbReference type="SUPFAM" id="SSF69055">
    <property type="entry name" value="1-deoxy-D-xylulose-5-phosphate reductoisomerase, C-terminal domain"/>
    <property type="match status" value="1"/>
</dbReference>
<dbReference type="SUPFAM" id="SSF55347">
    <property type="entry name" value="Glyceraldehyde-3-phosphate dehydrogenase-like, C-terminal domain"/>
    <property type="match status" value="1"/>
</dbReference>
<dbReference type="SUPFAM" id="SSF51735">
    <property type="entry name" value="NAD(P)-binding Rossmann-fold domains"/>
    <property type="match status" value="1"/>
</dbReference>
<proteinExistence type="inferred from homology"/>
<reference key="1">
    <citation type="submission" date="2007-06" db="EMBL/GenBank/DDBJ databases">
        <authorList>
            <person name="Dodson R.J."/>
            <person name="Harkins D."/>
            <person name="Paulsen I.T."/>
        </authorList>
    </citation>
    <scope>NUCLEOTIDE SEQUENCE [LARGE SCALE GENOMIC DNA]</scope>
    <source>
        <strain>DSM 24068 / PA7</strain>
    </source>
</reference>
<keyword id="KW-0414">Isoprene biosynthesis</keyword>
<keyword id="KW-0464">Manganese</keyword>
<keyword id="KW-0479">Metal-binding</keyword>
<keyword id="KW-0521">NADP</keyword>
<keyword id="KW-0560">Oxidoreductase</keyword>
<evidence type="ECO:0000255" key="1">
    <source>
        <dbReference type="HAMAP-Rule" id="MF_00183"/>
    </source>
</evidence>
<feature type="chain" id="PRO_1000020289" description="1-deoxy-D-xylulose 5-phosphate reductoisomerase">
    <location>
        <begin position="1"/>
        <end position="396"/>
    </location>
</feature>
<feature type="binding site" evidence="1">
    <location>
        <position position="13"/>
    </location>
    <ligand>
        <name>NADPH</name>
        <dbReference type="ChEBI" id="CHEBI:57783"/>
    </ligand>
</feature>
<feature type="binding site" evidence="1">
    <location>
        <position position="14"/>
    </location>
    <ligand>
        <name>NADPH</name>
        <dbReference type="ChEBI" id="CHEBI:57783"/>
    </ligand>
</feature>
<feature type="binding site" evidence="1">
    <location>
        <position position="15"/>
    </location>
    <ligand>
        <name>NADPH</name>
        <dbReference type="ChEBI" id="CHEBI:57783"/>
    </ligand>
</feature>
<feature type="binding site" evidence="1">
    <location>
        <position position="16"/>
    </location>
    <ligand>
        <name>NADPH</name>
        <dbReference type="ChEBI" id="CHEBI:57783"/>
    </ligand>
</feature>
<feature type="binding site" evidence="1">
    <location>
        <position position="127"/>
    </location>
    <ligand>
        <name>NADPH</name>
        <dbReference type="ChEBI" id="CHEBI:57783"/>
    </ligand>
</feature>
<feature type="binding site" evidence="1">
    <location>
        <position position="128"/>
    </location>
    <ligand>
        <name>1-deoxy-D-xylulose 5-phosphate</name>
        <dbReference type="ChEBI" id="CHEBI:57792"/>
    </ligand>
</feature>
<feature type="binding site" evidence="1">
    <location>
        <position position="129"/>
    </location>
    <ligand>
        <name>NADPH</name>
        <dbReference type="ChEBI" id="CHEBI:57783"/>
    </ligand>
</feature>
<feature type="binding site" evidence="1">
    <location>
        <position position="153"/>
    </location>
    <ligand>
        <name>Mn(2+)</name>
        <dbReference type="ChEBI" id="CHEBI:29035"/>
    </ligand>
</feature>
<feature type="binding site" evidence="1">
    <location>
        <position position="154"/>
    </location>
    <ligand>
        <name>1-deoxy-D-xylulose 5-phosphate</name>
        <dbReference type="ChEBI" id="CHEBI:57792"/>
    </ligand>
</feature>
<feature type="binding site" evidence="1">
    <location>
        <position position="155"/>
    </location>
    <ligand>
        <name>1-deoxy-D-xylulose 5-phosphate</name>
        <dbReference type="ChEBI" id="CHEBI:57792"/>
    </ligand>
</feature>
<feature type="binding site" evidence="1">
    <location>
        <position position="155"/>
    </location>
    <ligand>
        <name>Mn(2+)</name>
        <dbReference type="ChEBI" id="CHEBI:29035"/>
    </ligand>
</feature>
<feature type="binding site" evidence="1">
    <location>
        <position position="184"/>
    </location>
    <ligand>
        <name>1-deoxy-D-xylulose 5-phosphate</name>
        <dbReference type="ChEBI" id="CHEBI:57792"/>
    </ligand>
</feature>
<feature type="binding site" evidence="1">
    <location>
        <position position="207"/>
    </location>
    <ligand>
        <name>1-deoxy-D-xylulose 5-phosphate</name>
        <dbReference type="ChEBI" id="CHEBI:57792"/>
    </ligand>
</feature>
<feature type="binding site" evidence="1">
    <location>
        <position position="213"/>
    </location>
    <ligand>
        <name>NADPH</name>
        <dbReference type="ChEBI" id="CHEBI:57783"/>
    </ligand>
</feature>
<feature type="binding site" evidence="1">
    <location>
        <position position="220"/>
    </location>
    <ligand>
        <name>1-deoxy-D-xylulose 5-phosphate</name>
        <dbReference type="ChEBI" id="CHEBI:57792"/>
    </ligand>
</feature>
<feature type="binding site" evidence="1">
    <location>
        <position position="225"/>
    </location>
    <ligand>
        <name>1-deoxy-D-xylulose 5-phosphate</name>
        <dbReference type="ChEBI" id="CHEBI:57792"/>
    </ligand>
</feature>
<feature type="binding site" evidence="1">
    <location>
        <position position="226"/>
    </location>
    <ligand>
        <name>1-deoxy-D-xylulose 5-phosphate</name>
        <dbReference type="ChEBI" id="CHEBI:57792"/>
    </ligand>
</feature>
<feature type="binding site" evidence="1">
    <location>
        <position position="229"/>
    </location>
    <ligand>
        <name>1-deoxy-D-xylulose 5-phosphate</name>
        <dbReference type="ChEBI" id="CHEBI:57792"/>
    </ligand>
</feature>
<feature type="binding site" evidence="1">
    <location>
        <position position="229"/>
    </location>
    <ligand>
        <name>Mn(2+)</name>
        <dbReference type="ChEBI" id="CHEBI:29035"/>
    </ligand>
</feature>